<reference key="1">
    <citation type="journal article" date="2002" name="Science">
        <title>50 million years of genomic stasis in endosymbiotic bacteria.</title>
        <authorList>
            <person name="Tamas I."/>
            <person name="Klasson L."/>
            <person name="Canbaeck B."/>
            <person name="Naeslund A.K."/>
            <person name="Eriksson A.-S."/>
            <person name="Wernegreen J.J."/>
            <person name="Sandstroem J.P."/>
            <person name="Moran N.A."/>
            <person name="Andersson S.G.E."/>
        </authorList>
    </citation>
    <scope>NUCLEOTIDE SEQUENCE [LARGE SCALE GENOMIC DNA]</scope>
    <source>
        <strain>Sg</strain>
    </source>
</reference>
<comment type="function">
    <text evidence="1">Catalyzes the base-exchange of a guanine (G) residue with the queuine precursor 7-aminomethyl-7-deazaguanine (PreQ1) at position 34 (anticodon wobble position) in tRNAs with GU(N) anticodons (tRNA-Asp, -Asn, -His and -Tyr). Catalysis occurs through a double-displacement mechanism. The nucleophile active site attacks the C1' of nucleotide 34 to detach the guanine base from the RNA, forming a covalent enzyme-RNA intermediate. The proton acceptor active site deprotonates the incoming PreQ1, allowing a nucleophilic attack on the C1' of the ribose to form the product. After dissociation, two additional enzymatic reactions on the tRNA convert PreQ1 to queuine (Q), resulting in the hypermodified nucleoside queuosine (7-(((4,5-cis-dihydroxy-2-cyclopenten-1-yl)amino)methyl)-7-deazaguanosine).</text>
</comment>
<comment type="catalytic activity">
    <reaction evidence="1">
        <text>7-aminomethyl-7-carbaguanine + guanosine(34) in tRNA = 7-aminomethyl-7-carbaguanosine(34) in tRNA + guanine</text>
        <dbReference type="Rhea" id="RHEA:24104"/>
        <dbReference type="Rhea" id="RHEA-COMP:10341"/>
        <dbReference type="Rhea" id="RHEA-COMP:10342"/>
        <dbReference type="ChEBI" id="CHEBI:16235"/>
        <dbReference type="ChEBI" id="CHEBI:58703"/>
        <dbReference type="ChEBI" id="CHEBI:74269"/>
        <dbReference type="ChEBI" id="CHEBI:82833"/>
        <dbReference type="EC" id="2.4.2.29"/>
    </reaction>
</comment>
<comment type="cofactor">
    <cofactor evidence="1">
        <name>Zn(2+)</name>
        <dbReference type="ChEBI" id="CHEBI:29105"/>
    </cofactor>
    <text evidence="1">Binds 1 zinc ion per subunit.</text>
</comment>
<comment type="pathway">
    <text evidence="1">tRNA modification; tRNA-queuosine biosynthesis.</text>
</comment>
<comment type="subunit">
    <text evidence="1">Homodimer. Within each dimer, one monomer is responsible for RNA recognition and catalysis, while the other monomer binds to the replacement base PreQ1.</text>
</comment>
<comment type="similarity">
    <text evidence="1">Belongs to the queuine tRNA-ribosyltransferase family.</text>
</comment>
<evidence type="ECO:0000255" key="1">
    <source>
        <dbReference type="HAMAP-Rule" id="MF_00168"/>
    </source>
</evidence>
<protein>
    <recommendedName>
        <fullName evidence="1">Queuine tRNA-ribosyltransferase</fullName>
        <ecNumber evidence="1">2.4.2.29</ecNumber>
    </recommendedName>
    <alternativeName>
        <fullName evidence="1">Guanine insertion enzyme</fullName>
    </alternativeName>
    <alternativeName>
        <fullName evidence="1">tRNA-guanine transglycosylase</fullName>
    </alternativeName>
</protein>
<keyword id="KW-0328">Glycosyltransferase</keyword>
<keyword id="KW-0479">Metal-binding</keyword>
<keyword id="KW-0671">Queuosine biosynthesis</keyword>
<keyword id="KW-0808">Transferase</keyword>
<keyword id="KW-0819">tRNA processing</keyword>
<keyword id="KW-0862">Zinc</keyword>
<organism>
    <name type="scientific">Buchnera aphidicola subsp. Schizaphis graminum (strain Sg)</name>
    <dbReference type="NCBI Taxonomy" id="198804"/>
    <lineage>
        <taxon>Bacteria</taxon>
        <taxon>Pseudomonadati</taxon>
        <taxon>Pseudomonadota</taxon>
        <taxon>Gammaproteobacteria</taxon>
        <taxon>Enterobacterales</taxon>
        <taxon>Erwiniaceae</taxon>
        <taxon>Buchnera</taxon>
    </lineage>
</organism>
<accession>Q8KA09</accession>
<feature type="chain" id="PRO_0000135458" description="Queuine tRNA-ribosyltransferase">
    <location>
        <begin position="1"/>
        <end position="368"/>
    </location>
</feature>
<feature type="region of interest" description="RNA binding" evidence="1">
    <location>
        <begin position="247"/>
        <end position="253"/>
    </location>
</feature>
<feature type="region of interest" description="RNA binding; important for wobble base 34 recognition" evidence="1">
    <location>
        <begin position="271"/>
        <end position="275"/>
    </location>
</feature>
<feature type="active site" description="Proton acceptor" evidence="1">
    <location>
        <position position="89"/>
    </location>
</feature>
<feature type="active site" description="Nucleophile" evidence="1">
    <location>
        <position position="266"/>
    </location>
</feature>
<feature type="binding site" evidence="1">
    <location>
        <begin position="89"/>
        <end position="93"/>
    </location>
    <ligand>
        <name>substrate</name>
    </ligand>
</feature>
<feature type="binding site" evidence="1">
    <location>
        <position position="143"/>
    </location>
    <ligand>
        <name>substrate</name>
    </ligand>
</feature>
<feature type="binding site" evidence="1">
    <location>
        <position position="216"/>
    </location>
    <ligand>
        <name>substrate</name>
    </ligand>
</feature>
<feature type="binding site" evidence="1">
    <location>
        <position position="304"/>
    </location>
    <ligand>
        <name>Zn(2+)</name>
        <dbReference type="ChEBI" id="CHEBI:29105"/>
    </ligand>
</feature>
<feature type="binding site" evidence="1">
    <location>
        <position position="306"/>
    </location>
    <ligand>
        <name>Zn(2+)</name>
        <dbReference type="ChEBI" id="CHEBI:29105"/>
    </ligand>
</feature>
<feature type="binding site" evidence="1">
    <location>
        <position position="309"/>
    </location>
    <ligand>
        <name>Zn(2+)</name>
        <dbReference type="ChEBI" id="CHEBI:29105"/>
    </ligand>
</feature>
<feature type="binding site" evidence="1">
    <location>
        <position position="335"/>
    </location>
    <ligand>
        <name>Zn(2+)</name>
        <dbReference type="ChEBI" id="CHEBI:29105"/>
    </ligand>
</feature>
<gene>
    <name evidence="1" type="primary">tgt</name>
    <name type="ordered locus">BUsg_125</name>
</gene>
<sequence length="368" mass="42578">MKFQVISQDKEARHGMFNFNGNIIETPVFMPVGTYGTVKSLNIEEIKNTGSKIILSNALHLYLRPGQDIIKLHGSLHNFMNWNGPILTDSGGFQIFSLSNFCRIKEEGVIFKNHINGKKFFLTPELSMEIQIDLGSNIIMIFDECIAYNKDWEKTKFAMERSLNWSRRSRIHFDLKKKNKKNLLFGIIHGGSYKSLRDISLKELIKMDFDGYALGGLAVGESKLEMHDLLDHITPQIPKKKPRYLMGVGKPEDLIESVYRGIDMFDCVLPTRNARNGHLFVTNGIIKIRNAKYKKDLSVLDKKCTCYTCQNYSRSYLHHLDSCNEILGARLNTIHNLHYYQTLMFNIRNAIKQKKFDEFVSNFYNQKK</sequence>
<dbReference type="EC" id="2.4.2.29" evidence="1"/>
<dbReference type="EMBL" id="AE013218">
    <property type="protein sequence ID" value="AAM67693.1"/>
    <property type="molecule type" value="Genomic_DNA"/>
</dbReference>
<dbReference type="RefSeq" id="WP_011053660.1">
    <property type="nucleotide sequence ID" value="NC_004061.1"/>
</dbReference>
<dbReference type="SMR" id="Q8KA09"/>
<dbReference type="STRING" id="198804.BUsg_125"/>
<dbReference type="GeneID" id="93003595"/>
<dbReference type="KEGG" id="bas:BUsg_125"/>
<dbReference type="eggNOG" id="COG0343">
    <property type="taxonomic scope" value="Bacteria"/>
</dbReference>
<dbReference type="HOGENOM" id="CLU_022060_0_1_6"/>
<dbReference type="UniPathway" id="UPA00392"/>
<dbReference type="Proteomes" id="UP000000416">
    <property type="component" value="Chromosome"/>
</dbReference>
<dbReference type="GO" id="GO:0005829">
    <property type="term" value="C:cytosol"/>
    <property type="evidence" value="ECO:0007669"/>
    <property type="project" value="TreeGrafter"/>
</dbReference>
<dbReference type="GO" id="GO:0046872">
    <property type="term" value="F:metal ion binding"/>
    <property type="evidence" value="ECO:0007669"/>
    <property type="project" value="UniProtKB-KW"/>
</dbReference>
<dbReference type="GO" id="GO:0008479">
    <property type="term" value="F:tRNA-guanosine(34) queuine transglycosylase activity"/>
    <property type="evidence" value="ECO:0007669"/>
    <property type="project" value="UniProtKB-UniRule"/>
</dbReference>
<dbReference type="GO" id="GO:0008616">
    <property type="term" value="P:queuosine biosynthetic process"/>
    <property type="evidence" value="ECO:0007669"/>
    <property type="project" value="UniProtKB-UniRule"/>
</dbReference>
<dbReference type="GO" id="GO:0002099">
    <property type="term" value="P:tRNA wobble guanine modification"/>
    <property type="evidence" value="ECO:0007669"/>
    <property type="project" value="TreeGrafter"/>
</dbReference>
<dbReference type="GO" id="GO:0101030">
    <property type="term" value="P:tRNA-guanine transglycosylation"/>
    <property type="evidence" value="ECO:0007669"/>
    <property type="project" value="InterPro"/>
</dbReference>
<dbReference type="FunFam" id="3.20.20.105:FF:000001">
    <property type="entry name" value="Queuine tRNA-ribosyltransferase"/>
    <property type="match status" value="1"/>
</dbReference>
<dbReference type="Gene3D" id="3.20.20.105">
    <property type="entry name" value="Queuine tRNA-ribosyltransferase-like"/>
    <property type="match status" value="1"/>
</dbReference>
<dbReference type="HAMAP" id="MF_00168">
    <property type="entry name" value="Q_tRNA_Tgt"/>
    <property type="match status" value="1"/>
</dbReference>
<dbReference type="InterPro" id="IPR050076">
    <property type="entry name" value="ArchSynthase1/Queuine_TRR"/>
</dbReference>
<dbReference type="InterPro" id="IPR004803">
    <property type="entry name" value="TGT"/>
</dbReference>
<dbReference type="InterPro" id="IPR036511">
    <property type="entry name" value="TGT-like_sf"/>
</dbReference>
<dbReference type="InterPro" id="IPR002616">
    <property type="entry name" value="tRNA_ribo_trans-like"/>
</dbReference>
<dbReference type="NCBIfam" id="TIGR00430">
    <property type="entry name" value="Q_tRNA_tgt"/>
    <property type="match status" value="1"/>
</dbReference>
<dbReference type="NCBIfam" id="TIGR00449">
    <property type="entry name" value="tgt_general"/>
    <property type="match status" value="1"/>
</dbReference>
<dbReference type="PANTHER" id="PTHR46499">
    <property type="entry name" value="QUEUINE TRNA-RIBOSYLTRANSFERASE"/>
    <property type="match status" value="1"/>
</dbReference>
<dbReference type="PANTHER" id="PTHR46499:SF1">
    <property type="entry name" value="QUEUINE TRNA-RIBOSYLTRANSFERASE"/>
    <property type="match status" value="1"/>
</dbReference>
<dbReference type="Pfam" id="PF01702">
    <property type="entry name" value="TGT"/>
    <property type="match status" value="1"/>
</dbReference>
<dbReference type="SUPFAM" id="SSF51713">
    <property type="entry name" value="tRNA-guanine transglycosylase"/>
    <property type="match status" value="1"/>
</dbReference>
<name>TGT_BUCAP</name>
<proteinExistence type="inferred from homology"/>